<reference key="1">
    <citation type="journal article" date="2009" name="Appl. Environ. Microbiol.">
        <title>Complete genome sequence of the chemolithoautotrophic marine magnetotactic coccus strain MC-1.</title>
        <authorList>
            <person name="Schubbe S."/>
            <person name="Williams T.J."/>
            <person name="Xie G."/>
            <person name="Kiss H.E."/>
            <person name="Brettin T.S."/>
            <person name="Martinez D."/>
            <person name="Ross C.A."/>
            <person name="Schuler D."/>
            <person name="Cox B.L."/>
            <person name="Nealson K.H."/>
            <person name="Bazylinski D.A."/>
        </authorList>
    </citation>
    <scope>NUCLEOTIDE SEQUENCE [LARGE SCALE GENOMIC DNA]</scope>
    <source>
        <strain>ATCC BAA-1437 / JCM 17883 / MC-1</strain>
    </source>
</reference>
<dbReference type="EC" id="5.2.1.8" evidence="1"/>
<dbReference type="EMBL" id="CP000471">
    <property type="protein sequence ID" value="ABK46128.1"/>
    <property type="molecule type" value="Genomic_DNA"/>
</dbReference>
<dbReference type="RefSeq" id="WP_011715181.1">
    <property type="nucleotide sequence ID" value="NC_008576.1"/>
</dbReference>
<dbReference type="SMR" id="A0LDT5"/>
<dbReference type="STRING" id="156889.Mmc1_3643"/>
<dbReference type="KEGG" id="mgm:Mmc1_3643"/>
<dbReference type="eggNOG" id="COG0544">
    <property type="taxonomic scope" value="Bacteria"/>
</dbReference>
<dbReference type="HOGENOM" id="CLU_033058_3_2_5"/>
<dbReference type="OrthoDB" id="9767721at2"/>
<dbReference type="Proteomes" id="UP000002586">
    <property type="component" value="Chromosome"/>
</dbReference>
<dbReference type="GO" id="GO:0005737">
    <property type="term" value="C:cytoplasm"/>
    <property type="evidence" value="ECO:0007669"/>
    <property type="project" value="UniProtKB-SubCell"/>
</dbReference>
<dbReference type="GO" id="GO:0003755">
    <property type="term" value="F:peptidyl-prolyl cis-trans isomerase activity"/>
    <property type="evidence" value="ECO:0007669"/>
    <property type="project" value="UniProtKB-UniRule"/>
</dbReference>
<dbReference type="GO" id="GO:0044183">
    <property type="term" value="F:protein folding chaperone"/>
    <property type="evidence" value="ECO:0007669"/>
    <property type="project" value="TreeGrafter"/>
</dbReference>
<dbReference type="GO" id="GO:0043022">
    <property type="term" value="F:ribosome binding"/>
    <property type="evidence" value="ECO:0007669"/>
    <property type="project" value="TreeGrafter"/>
</dbReference>
<dbReference type="GO" id="GO:0051083">
    <property type="term" value="P:'de novo' cotranslational protein folding"/>
    <property type="evidence" value="ECO:0007669"/>
    <property type="project" value="TreeGrafter"/>
</dbReference>
<dbReference type="GO" id="GO:0051301">
    <property type="term" value="P:cell division"/>
    <property type="evidence" value="ECO:0007669"/>
    <property type="project" value="UniProtKB-KW"/>
</dbReference>
<dbReference type="GO" id="GO:0061077">
    <property type="term" value="P:chaperone-mediated protein folding"/>
    <property type="evidence" value="ECO:0007669"/>
    <property type="project" value="TreeGrafter"/>
</dbReference>
<dbReference type="GO" id="GO:0015031">
    <property type="term" value="P:protein transport"/>
    <property type="evidence" value="ECO:0007669"/>
    <property type="project" value="UniProtKB-UniRule"/>
</dbReference>
<dbReference type="GO" id="GO:0043335">
    <property type="term" value="P:protein unfolding"/>
    <property type="evidence" value="ECO:0007669"/>
    <property type="project" value="TreeGrafter"/>
</dbReference>
<dbReference type="FunFam" id="3.10.50.40:FF:000001">
    <property type="entry name" value="Trigger factor"/>
    <property type="match status" value="1"/>
</dbReference>
<dbReference type="Gene3D" id="3.10.50.40">
    <property type="match status" value="1"/>
</dbReference>
<dbReference type="Gene3D" id="3.30.70.1050">
    <property type="entry name" value="Trigger factor ribosome-binding domain"/>
    <property type="match status" value="1"/>
</dbReference>
<dbReference type="Gene3D" id="1.10.3120.10">
    <property type="entry name" value="Trigger factor, C-terminal domain"/>
    <property type="match status" value="1"/>
</dbReference>
<dbReference type="HAMAP" id="MF_00303">
    <property type="entry name" value="Trigger_factor_Tig"/>
    <property type="match status" value="1"/>
</dbReference>
<dbReference type="InterPro" id="IPR046357">
    <property type="entry name" value="PPIase_dom_sf"/>
</dbReference>
<dbReference type="InterPro" id="IPR001179">
    <property type="entry name" value="PPIase_FKBP_dom"/>
</dbReference>
<dbReference type="InterPro" id="IPR005215">
    <property type="entry name" value="Trig_fac"/>
</dbReference>
<dbReference type="InterPro" id="IPR008880">
    <property type="entry name" value="Trigger_fac_C"/>
</dbReference>
<dbReference type="InterPro" id="IPR037041">
    <property type="entry name" value="Trigger_fac_C_sf"/>
</dbReference>
<dbReference type="InterPro" id="IPR008881">
    <property type="entry name" value="Trigger_fac_ribosome-bd_bac"/>
</dbReference>
<dbReference type="InterPro" id="IPR036611">
    <property type="entry name" value="Trigger_fac_ribosome-bd_sf"/>
</dbReference>
<dbReference type="InterPro" id="IPR027304">
    <property type="entry name" value="Trigger_fact/SurA_dom_sf"/>
</dbReference>
<dbReference type="NCBIfam" id="TIGR00115">
    <property type="entry name" value="tig"/>
    <property type="match status" value="1"/>
</dbReference>
<dbReference type="PANTHER" id="PTHR30560">
    <property type="entry name" value="TRIGGER FACTOR CHAPERONE AND PEPTIDYL-PROLYL CIS/TRANS ISOMERASE"/>
    <property type="match status" value="1"/>
</dbReference>
<dbReference type="PANTHER" id="PTHR30560:SF3">
    <property type="entry name" value="TRIGGER FACTOR-LIKE PROTEIN TIG, CHLOROPLASTIC"/>
    <property type="match status" value="1"/>
</dbReference>
<dbReference type="Pfam" id="PF00254">
    <property type="entry name" value="FKBP_C"/>
    <property type="match status" value="1"/>
</dbReference>
<dbReference type="Pfam" id="PF05698">
    <property type="entry name" value="Trigger_C"/>
    <property type="match status" value="1"/>
</dbReference>
<dbReference type="Pfam" id="PF05697">
    <property type="entry name" value="Trigger_N"/>
    <property type="match status" value="1"/>
</dbReference>
<dbReference type="PIRSF" id="PIRSF003095">
    <property type="entry name" value="Trigger_factor"/>
    <property type="match status" value="1"/>
</dbReference>
<dbReference type="SUPFAM" id="SSF54534">
    <property type="entry name" value="FKBP-like"/>
    <property type="match status" value="1"/>
</dbReference>
<dbReference type="SUPFAM" id="SSF109998">
    <property type="entry name" value="Triger factor/SurA peptide-binding domain-like"/>
    <property type="match status" value="1"/>
</dbReference>
<dbReference type="SUPFAM" id="SSF102735">
    <property type="entry name" value="Trigger factor ribosome-binding domain"/>
    <property type="match status" value="1"/>
</dbReference>
<dbReference type="PROSITE" id="PS50059">
    <property type="entry name" value="FKBP_PPIASE"/>
    <property type="match status" value="1"/>
</dbReference>
<keyword id="KW-0131">Cell cycle</keyword>
<keyword id="KW-0132">Cell division</keyword>
<keyword id="KW-0143">Chaperone</keyword>
<keyword id="KW-0963">Cytoplasm</keyword>
<keyword id="KW-0413">Isomerase</keyword>
<keyword id="KW-1185">Reference proteome</keyword>
<keyword id="KW-0697">Rotamase</keyword>
<feature type="chain" id="PRO_1000022705" description="Trigger factor">
    <location>
        <begin position="1"/>
        <end position="442"/>
    </location>
</feature>
<feature type="domain" description="PPIase FKBP-type" evidence="1">
    <location>
        <begin position="162"/>
        <end position="247"/>
    </location>
</feature>
<sequence length="442" mass="49314">MEVNVVENGLFDRDITITVAAEKVDALLSQEMTKTAAQVRLPGFRAGKVPTKMIEQRFGASIRAEVAEQLFRDSYPTALMEKGLRPVGQPELDLVELEKGKPFTYTAKIQIFPVIEPKDYTGMSLTKPVVTIQDSDVETVITRVREANAEYRTQEGVAAASGDRMTFDFEGFVDGEAFEGGKAEDYVLELGSNRFIPGFEDQLIGAKGGDALEVKVTFPEDYHGTQLAGKEAIFKCVVKAIESRELPEVDEELAKKAGVQEGGVEAMKQEIHERLVKEADKVAKQEMKQQVFKLLLENNPNELPSQMVDHEIEQMVATAKEEYSRQGVDPEQLGFTDETWRNQYAEKAKERIILGLLMGSIVSKENLEIDDQAVEAHIDALVQQFAAGDYAEQLKAQLKKDKARLEEFRGAALEEKTVAWLIEQGTVTEEEKSFEELVAQRG</sequence>
<evidence type="ECO:0000255" key="1">
    <source>
        <dbReference type="HAMAP-Rule" id="MF_00303"/>
    </source>
</evidence>
<organism>
    <name type="scientific">Magnetococcus marinus (strain ATCC BAA-1437 / JCM 17883 / MC-1)</name>
    <dbReference type="NCBI Taxonomy" id="156889"/>
    <lineage>
        <taxon>Bacteria</taxon>
        <taxon>Pseudomonadati</taxon>
        <taxon>Pseudomonadota</taxon>
        <taxon>Alphaproteobacteria</taxon>
        <taxon>Magnetococcales</taxon>
        <taxon>Magnetococcaceae</taxon>
        <taxon>Magnetococcus</taxon>
    </lineage>
</organism>
<name>TIG_MAGMM</name>
<accession>A0LDT5</accession>
<protein>
    <recommendedName>
        <fullName evidence="1">Trigger factor</fullName>
        <shortName evidence="1">TF</shortName>
        <ecNumber evidence="1">5.2.1.8</ecNumber>
    </recommendedName>
    <alternativeName>
        <fullName evidence="1">PPIase</fullName>
    </alternativeName>
</protein>
<comment type="function">
    <text evidence="1">Involved in protein export. Acts as a chaperone by maintaining the newly synthesized protein in an open conformation. Functions as a peptidyl-prolyl cis-trans isomerase.</text>
</comment>
<comment type="catalytic activity">
    <reaction evidence="1">
        <text>[protein]-peptidylproline (omega=180) = [protein]-peptidylproline (omega=0)</text>
        <dbReference type="Rhea" id="RHEA:16237"/>
        <dbReference type="Rhea" id="RHEA-COMP:10747"/>
        <dbReference type="Rhea" id="RHEA-COMP:10748"/>
        <dbReference type="ChEBI" id="CHEBI:83833"/>
        <dbReference type="ChEBI" id="CHEBI:83834"/>
        <dbReference type="EC" id="5.2.1.8"/>
    </reaction>
</comment>
<comment type="subcellular location">
    <subcellularLocation>
        <location>Cytoplasm</location>
    </subcellularLocation>
    <text evidence="1">About half TF is bound to the ribosome near the polypeptide exit tunnel while the other half is free in the cytoplasm.</text>
</comment>
<comment type="domain">
    <text evidence="1">Consists of 3 domains; the N-terminus binds the ribosome, the middle domain has PPIase activity, while the C-terminus has intrinsic chaperone activity on its own.</text>
</comment>
<comment type="similarity">
    <text evidence="1">Belongs to the FKBP-type PPIase family. Tig subfamily.</text>
</comment>
<proteinExistence type="inferred from homology"/>
<gene>
    <name evidence="1" type="primary">tig</name>
    <name type="ordered locus">Mmc1_3643</name>
</gene>